<feature type="chain" id="PRO_1000192296" description="Nucleoside diphosphate kinase">
    <location>
        <begin position="1"/>
        <end position="135"/>
    </location>
</feature>
<feature type="active site" description="Pros-phosphohistidine intermediate" evidence="1">
    <location>
        <position position="115"/>
    </location>
</feature>
<feature type="binding site" evidence="1">
    <location>
        <position position="9"/>
    </location>
    <ligand>
        <name>ATP</name>
        <dbReference type="ChEBI" id="CHEBI:30616"/>
    </ligand>
</feature>
<feature type="binding site" evidence="1">
    <location>
        <position position="57"/>
    </location>
    <ligand>
        <name>ATP</name>
        <dbReference type="ChEBI" id="CHEBI:30616"/>
    </ligand>
</feature>
<feature type="binding site" evidence="1">
    <location>
        <position position="85"/>
    </location>
    <ligand>
        <name>ATP</name>
        <dbReference type="ChEBI" id="CHEBI:30616"/>
    </ligand>
</feature>
<feature type="binding site" evidence="1">
    <location>
        <position position="91"/>
    </location>
    <ligand>
        <name>ATP</name>
        <dbReference type="ChEBI" id="CHEBI:30616"/>
    </ligand>
</feature>
<feature type="binding site" evidence="1">
    <location>
        <position position="102"/>
    </location>
    <ligand>
        <name>ATP</name>
        <dbReference type="ChEBI" id="CHEBI:30616"/>
    </ligand>
</feature>
<feature type="binding site" evidence="1">
    <location>
        <position position="112"/>
    </location>
    <ligand>
        <name>ATP</name>
        <dbReference type="ChEBI" id="CHEBI:30616"/>
    </ligand>
</feature>
<evidence type="ECO:0000255" key="1">
    <source>
        <dbReference type="HAMAP-Rule" id="MF_00451"/>
    </source>
</evidence>
<protein>
    <recommendedName>
        <fullName evidence="1">Nucleoside diphosphate kinase</fullName>
        <shortName evidence="1">NDK</shortName>
        <shortName evidence="1">NDP kinase</shortName>
        <ecNumber evidence="1">2.7.4.6</ecNumber>
    </recommendedName>
    <alternativeName>
        <fullName evidence="1">Nucleoside-2-P kinase</fullName>
    </alternativeName>
</protein>
<accession>B0KAQ8</accession>
<comment type="function">
    <text evidence="1">Major role in the synthesis of nucleoside triphosphates other than ATP. The ATP gamma phosphate is transferred to the NDP beta phosphate via a ping-pong mechanism, using a phosphorylated active-site intermediate.</text>
</comment>
<comment type="catalytic activity">
    <reaction evidence="1">
        <text>a 2'-deoxyribonucleoside 5'-diphosphate + ATP = a 2'-deoxyribonucleoside 5'-triphosphate + ADP</text>
        <dbReference type="Rhea" id="RHEA:44640"/>
        <dbReference type="ChEBI" id="CHEBI:30616"/>
        <dbReference type="ChEBI" id="CHEBI:61560"/>
        <dbReference type="ChEBI" id="CHEBI:73316"/>
        <dbReference type="ChEBI" id="CHEBI:456216"/>
        <dbReference type="EC" id="2.7.4.6"/>
    </reaction>
</comment>
<comment type="catalytic activity">
    <reaction evidence="1">
        <text>a ribonucleoside 5'-diphosphate + ATP = a ribonucleoside 5'-triphosphate + ADP</text>
        <dbReference type="Rhea" id="RHEA:18113"/>
        <dbReference type="ChEBI" id="CHEBI:30616"/>
        <dbReference type="ChEBI" id="CHEBI:57930"/>
        <dbReference type="ChEBI" id="CHEBI:61557"/>
        <dbReference type="ChEBI" id="CHEBI:456216"/>
        <dbReference type="EC" id="2.7.4.6"/>
    </reaction>
</comment>
<comment type="cofactor">
    <cofactor evidence="1">
        <name>Mg(2+)</name>
        <dbReference type="ChEBI" id="CHEBI:18420"/>
    </cofactor>
</comment>
<comment type="subunit">
    <text evidence="1">Homotetramer.</text>
</comment>
<comment type="subcellular location">
    <subcellularLocation>
        <location evidence="1">Cytoplasm</location>
    </subcellularLocation>
</comment>
<comment type="similarity">
    <text evidence="1">Belongs to the NDK family.</text>
</comment>
<organism>
    <name type="scientific">Thermoanaerobacter pseudethanolicus (strain ATCC 33223 / 39E)</name>
    <name type="common">Clostridium thermohydrosulfuricum</name>
    <dbReference type="NCBI Taxonomy" id="340099"/>
    <lineage>
        <taxon>Bacteria</taxon>
        <taxon>Bacillati</taxon>
        <taxon>Bacillota</taxon>
        <taxon>Clostridia</taxon>
        <taxon>Thermoanaerobacterales</taxon>
        <taxon>Thermoanaerobacteraceae</taxon>
        <taxon>Thermoanaerobacter</taxon>
    </lineage>
</organism>
<dbReference type="EC" id="2.7.4.6" evidence="1"/>
<dbReference type="EMBL" id="CP000924">
    <property type="protein sequence ID" value="ABY95192.1"/>
    <property type="molecule type" value="Genomic_DNA"/>
</dbReference>
<dbReference type="RefSeq" id="WP_003867735.1">
    <property type="nucleotide sequence ID" value="NC_010321.1"/>
</dbReference>
<dbReference type="SMR" id="B0KAQ8"/>
<dbReference type="STRING" id="340099.Teth39_1547"/>
<dbReference type="KEGG" id="tpd:Teth39_1547"/>
<dbReference type="eggNOG" id="COG0105">
    <property type="taxonomic scope" value="Bacteria"/>
</dbReference>
<dbReference type="HOGENOM" id="CLU_060216_6_3_9"/>
<dbReference type="Proteomes" id="UP000002156">
    <property type="component" value="Chromosome"/>
</dbReference>
<dbReference type="GO" id="GO:0005737">
    <property type="term" value="C:cytoplasm"/>
    <property type="evidence" value="ECO:0007669"/>
    <property type="project" value="UniProtKB-SubCell"/>
</dbReference>
<dbReference type="GO" id="GO:0005524">
    <property type="term" value="F:ATP binding"/>
    <property type="evidence" value="ECO:0007669"/>
    <property type="project" value="UniProtKB-UniRule"/>
</dbReference>
<dbReference type="GO" id="GO:0046872">
    <property type="term" value="F:metal ion binding"/>
    <property type="evidence" value="ECO:0007669"/>
    <property type="project" value="UniProtKB-KW"/>
</dbReference>
<dbReference type="GO" id="GO:0004550">
    <property type="term" value="F:nucleoside diphosphate kinase activity"/>
    <property type="evidence" value="ECO:0007669"/>
    <property type="project" value="UniProtKB-UniRule"/>
</dbReference>
<dbReference type="GO" id="GO:0006241">
    <property type="term" value="P:CTP biosynthetic process"/>
    <property type="evidence" value="ECO:0007669"/>
    <property type="project" value="UniProtKB-UniRule"/>
</dbReference>
<dbReference type="GO" id="GO:0006183">
    <property type="term" value="P:GTP biosynthetic process"/>
    <property type="evidence" value="ECO:0007669"/>
    <property type="project" value="UniProtKB-UniRule"/>
</dbReference>
<dbReference type="GO" id="GO:0006228">
    <property type="term" value="P:UTP biosynthetic process"/>
    <property type="evidence" value="ECO:0007669"/>
    <property type="project" value="UniProtKB-UniRule"/>
</dbReference>
<dbReference type="CDD" id="cd04413">
    <property type="entry name" value="NDPk_I"/>
    <property type="match status" value="1"/>
</dbReference>
<dbReference type="FunFam" id="3.30.70.141:FF:000003">
    <property type="entry name" value="Nucleoside diphosphate kinase"/>
    <property type="match status" value="1"/>
</dbReference>
<dbReference type="Gene3D" id="3.30.70.141">
    <property type="entry name" value="Nucleoside diphosphate kinase-like domain"/>
    <property type="match status" value="1"/>
</dbReference>
<dbReference type="HAMAP" id="MF_00451">
    <property type="entry name" value="NDP_kinase"/>
    <property type="match status" value="1"/>
</dbReference>
<dbReference type="InterPro" id="IPR034907">
    <property type="entry name" value="NDK-like_dom"/>
</dbReference>
<dbReference type="InterPro" id="IPR036850">
    <property type="entry name" value="NDK-like_dom_sf"/>
</dbReference>
<dbReference type="InterPro" id="IPR001564">
    <property type="entry name" value="Nucleoside_diP_kinase"/>
</dbReference>
<dbReference type="InterPro" id="IPR023005">
    <property type="entry name" value="Nucleoside_diP_kinase_AS"/>
</dbReference>
<dbReference type="NCBIfam" id="NF001908">
    <property type="entry name" value="PRK00668.1"/>
    <property type="match status" value="1"/>
</dbReference>
<dbReference type="PANTHER" id="PTHR11349">
    <property type="entry name" value="NUCLEOSIDE DIPHOSPHATE KINASE"/>
    <property type="match status" value="1"/>
</dbReference>
<dbReference type="Pfam" id="PF00334">
    <property type="entry name" value="NDK"/>
    <property type="match status" value="1"/>
</dbReference>
<dbReference type="PRINTS" id="PR01243">
    <property type="entry name" value="NUCDPKINASE"/>
</dbReference>
<dbReference type="SMART" id="SM00562">
    <property type="entry name" value="NDK"/>
    <property type="match status" value="1"/>
</dbReference>
<dbReference type="SUPFAM" id="SSF54919">
    <property type="entry name" value="Nucleoside diphosphate kinase, NDK"/>
    <property type="match status" value="1"/>
</dbReference>
<dbReference type="PROSITE" id="PS00469">
    <property type="entry name" value="NDPK"/>
    <property type="match status" value="1"/>
</dbReference>
<dbReference type="PROSITE" id="PS51374">
    <property type="entry name" value="NDPK_LIKE"/>
    <property type="match status" value="1"/>
</dbReference>
<reference key="1">
    <citation type="submission" date="2008-01" db="EMBL/GenBank/DDBJ databases">
        <title>Complete sequence of Thermoanaerobacter pseudethanolicus 39E.</title>
        <authorList>
            <person name="Copeland A."/>
            <person name="Lucas S."/>
            <person name="Lapidus A."/>
            <person name="Barry K."/>
            <person name="Glavina del Rio T."/>
            <person name="Dalin E."/>
            <person name="Tice H."/>
            <person name="Pitluck S."/>
            <person name="Bruce D."/>
            <person name="Goodwin L."/>
            <person name="Saunders E."/>
            <person name="Brettin T."/>
            <person name="Detter J.C."/>
            <person name="Han C."/>
            <person name="Schmutz J."/>
            <person name="Larimer F."/>
            <person name="Land M."/>
            <person name="Hauser L."/>
            <person name="Kyrpides N."/>
            <person name="Lykidis A."/>
            <person name="Hemme C."/>
            <person name="Fields M.W."/>
            <person name="He Z."/>
            <person name="Zhou J."/>
            <person name="Richardson P."/>
        </authorList>
    </citation>
    <scope>NUCLEOTIDE SEQUENCE [LARGE SCALE GENOMIC DNA]</scope>
    <source>
        <strain>ATCC 33223 / DSM 2355 / 39E</strain>
    </source>
</reference>
<keyword id="KW-0067">ATP-binding</keyword>
<keyword id="KW-0963">Cytoplasm</keyword>
<keyword id="KW-0418">Kinase</keyword>
<keyword id="KW-0460">Magnesium</keyword>
<keyword id="KW-0479">Metal-binding</keyword>
<keyword id="KW-0546">Nucleotide metabolism</keyword>
<keyword id="KW-0547">Nucleotide-binding</keyword>
<keyword id="KW-0597">Phosphoprotein</keyword>
<keyword id="KW-1185">Reference proteome</keyword>
<keyword id="KW-0808">Transferase</keyword>
<sequence>METTLAIVKPDGVKRGLIGEILKRYENKGLRLKAAKVITPTIELLEKHYEEHKGKPYYKPLIQYMSSGPVFAMVLEGENAVKIVRLLNGATKVEEALPGTIRGDFAISTTFNIIHGSDSIESAKREIALWFPELA</sequence>
<name>NDK_THEP3</name>
<proteinExistence type="inferred from homology"/>
<gene>
    <name evidence="1" type="primary">ndk</name>
    <name type="ordered locus">Teth39_1547</name>
</gene>